<protein>
    <recommendedName>
        <fullName>Glutaconyl-CoA decarboxylase subunit beta</fullName>
        <ecNumber>7.2.4.5</ecNumber>
    </recommendedName>
    <alternativeName>
        <fullName>Carboxylyase</fullName>
    </alternativeName>
</protein>
<name>GCDB_ACIFV</name>
<accession>Q9ZAA6</accession>
<accession>D2RM86</accession>
<sequence length="375" mass="38897">MDAFVVALTSVIQDSGFVAFTWGNAVMMLVGCILLYLAIVKGFEPLLLSPIAFGCILANVPRTGFETDPGVMQLILGGIKYEIFPPLIFMGVGAMTDFGPLIANPKTLLLGAAAQIGVFVALLGAMLLGFNVKEASAIGIIGGADGPTSIYLASKMAPHLLGAIAVAAYSYMSLVPLIQPPVMKLFTSKEERKIKMAQLRTVTHFEKVVFPIVTTIFISLLLPSVCSLIGMLMLGNLFTESGCMDRLSDTAQNALMNSVTIMLATGTGLTMKAESFLTLQTIEIICLGLVAFIGGTAGGVLFGKLMSKLDGGKTNPLIGSAGVSAVPMAARVSQVVGQQADPGNFLLMHAMGPNVAGVIGTAVAAGTMLAMVGGK</sequence>
<proteinExistence type="evidence at protein level"/>
<organism>
    <name type="scientific">Acidaminococcus fermentans (strain ATCC 25085 / DSM 20731 / CCUG 9996 / CIP 106432 / VR4)</name>
    <dbReference type="NCBI Taxonomy" id="591001"/>
    <lineage>
        <taxon>Bacteria</taxon>
        <taxon>Bacillati</taxon>
        <taxon>Bacillota</taxon>
        <taxon>Negativicutes</taxon>
        <taxon>Acidaminococcales</taxon>
        <taxon>Acidaminococcaceae</taxon>
        <taxon>Acidaminococcus</taxon>
    </lineage>
</organism>
<gene>
    <name type="primary">gcdB</name>
    <name type="ordered locus">Acfer_1834</name>
</gene>
<evidence type="ECO:0000255" key="1"/>
<evidence type="ECO:0000305" key="2"/>
<comment type="function">
    <text>Tunnel subunit of the primary sodium pump glutaconyl-CoA decarboxylase (GCD).</text>
</comment>
<comment type="catalytic activity">
    <reaction>
        <text>(2E)-glutaconyl-CoA + Na(+)(in) + H(+) = (2E)-butenoyl-CoA + Na(+)(out) + CO2</text>
        <dbReference type="Rhea" id="RHEA:23972"/>
        <dbReference type="ChEBI" id="CHEBI:15378"/>
        <dbReference type="ChEBI" id="CHEBI:16526"/>
        <dbReference type="ChEBI" id="CHEBI:29101"/>
        <dbReference type="ChEBI" id="CHEBI:57332"/>
        <dbReference type="ChEBI" id="CHEBI:57353"/>
        <dbReference type="EC" id="7.2.4.5"/>
    </reaction>
</comment>
<comment type="pathway">
    <text>Amino-acid degradation; L-glutamate degradation via hydroxyglutarate pathway; crotonoyl-CoA from L-glutamate: step 5/5.</text>
</comment>
<comment type="subunit">
    <text>Heterooctamer consisting of two alpha, two beta, two gamma and two delta subunits.</text>
</comment>
<comment type="subcellular location">
    <subcellularLocation>
        <location evidence="2">Cell membrane</location>
        <topology evidence="2">Multi-pass membrane protein</topology>
    </subcellularLocation>
</comment>
<comment type="PTM">
    <text>The N-terminus is blocked.</text>
</comment>
<comment type="similarity">
    <text evidence="2">Belongs to the GcdB/MmdB/OadB family.</text>
</comment>
<dbReference type="EC" id="7.2.4.5"/>
<dbReference type="EMBL" id="AF030576">
    <property type="protein sequence ID" value="AAC69173.1"/>
    <property type="molecule type" value="Genomic_DNA"/>
</dbReference>
<dbReference type="EMBL" id="CP001859">
    <property type="protein sequence ID" value="ADB48188.1"/>
    <property type="molecule type" value="Genomic_DNA"/>
</dbReference>
<dbReference type="RefSeq" id="WP_012939171.1">
    <property type="nucleotide sequence ID" value="NC_013740.1"/>
</dbReference>
<dbReference type="SMR" id="Q9ZAA6"/>
<dbReference type="STRING" id="591001.Acfer_1834"/>
<dbReference type="TCDB" id="3.B.1.1.3">
    <property type="family name" value="the na(+)-transporting carboxylic acid decarboxylase (nat-dc) family"/>
</dbReference>
<dbReference type="GeneID" id="78335530"/>
<dbReference type="KEGG" id="afn:Acfer_1834"/>
<dbReference type="eggNOG" id="COG1883">
    <property type="taxonomic scope" value="Bacteria"/>
</dbReference>
<dbReference type="HOGENOM" id="CLU_036168_0_0_9"/>
<dbReference type="OrthoDB" id="9783838at2"/>
<dbReference type="BioCyc" id="MetaCyc:MONOMER-1055"/>
<dbReference type="BRENDA" id="7.2.4.5">
    <property type="organism ID" value="85"/>
</dbReference>
<dbReference type="SABIO-RK" id="Q9ZAA6"/>
<dbReference type="UniPathway" id="UPA00533">
    <property type="reaction ID" value="UER00688"/>
</dbReference>
<dbReference type="Proteomes" id="UP000001902">
    <property type="component" value="Chromosome"/>
</dbReference>
<dbReference type="GO" id="GO:0005886">
    <property type="term" value="C:plasma membrane"/>
    <property type="evidence" value="ECO:0007669"/>
    <property type="project" value="UniProtKB-SubCell"/>
</dbReference>
<dbReference type="GO" id="GO:0018801">
    <property type="term" value="F:glutaconyl-CoA decarboxylase activity"/>
    <property type="evidence" value="ECO:0007669"/>
    <property type="project" value="UniProtKB-EC"/>
</dbReference>
<dbReference type="GO" id="GO:0019552">
    <property type="term" value="P:glutamate catabolic process via 2-hydroxyglutarate"/>
    <property type="evidence" value="ECO:0007669"/>
    <property type="project" value="UniProtKB-UniPathway"/>
</dbReference>
<dbReference type="GO" id="GO:0006814">
    <property type="term" value="P:sodium ion transport"/>
    <property type="evidence" value="ECO:0007669"/>
    <property type="project" value="UniProtKB-KW"/>
</dbReference>
<dbReference type="InterPro" id="IPR005661">
    <property type="entry name" value="OadB_MmdB"/>
</dbReference>
<dbReference type="NCBIfam" id="TIGR01109">
    <property type="entry name" value="Na_pump_decarbB"/>
    <property type="match status" value="1"/>
</dbReference>
<dbReference type="PANTHER" id="PTHR35806">
    <property type="entry name" value="OXALOACETATE DECARBOXYLASE BETA CHAIN 2"/>
    <property type="match status" value="1"/>
</dbReference>
<dbReference type="PANTHER" id="PTHR35806:SF1">
    <property type="entry name" value="OXALOACETATE DECARBOXYLASE BETA CHAIN 2"/>
    <property type="match status" value="1"/>
</dbReference>
<dbReference type="Pfam" id="PF03977">
    <property type="entry name" value="OAD_beta"/>
    <property type="match status" value="1"/>
</dbReference>
<dbReference type="PIRSF" id="PIRSF015658">
    <property type="entry name" value="MmdB_OadB"/>
    <property type="match status" value="1"/>
</dbReference>
<keyword id="KW-1003">Cell membrane</keyword>
<keyword id="KW-0210">Decarboxylase</keyword>
<keyword id="KW-0903">Direct protein sequencing</keyword>
<keyword id="KW-0406">Ion transport</keyword>
<keyword id="KW-0456">Lyase</keyword>
<keyword id="KW-0472">Membrane</keyword>
<keyword id="KW-1185">Reference proteome</keyword>
<keyword id="KW-0915">Sodium</keyword>
<keyword id="KW-0739">Sodium transport</keyword>
<keyword id="KW-1278">Translocase</keyword>
<keyword id="KW-0812">Transmembrane</keyword>
<keyword id="KW-1133">Transmembrane helix</keyword>
<keyword id="KW-0813">Transport</keyword>
<reference key="1">
    <citation type="journal article" date="1999" name="Mol. Microbiol.">
        <title>The sodium ion translocating glutaconyl-CoA decarboxylase from Acidaminococcus fermentans: cloning and function of the genes forming a second operon.</title>
        <authorList>
            <person name="Braune A."/>
            <person name="Bendrat K."/>
            <person name="Rospert S."/>
            <person name="Buckel W."/>
        </authorList>
    </citation>
    <scope>NUCLEOTIDE SEQUENCE [GENOMIC DNA]</scope>
    <scope>PROTEIN SEQUENCE OF 72-83 AND 233-243</scope>
    <scope>ALKYLATION</scope>
</reference>
<reference key="2">
    <citation type="journal article" date="2010" name="Stand. Genomic Sci.">
        <title>Complete genome sequence of Acidaminococcus fermentans type strain (VR4).</title>
        <authorList>
            <person name="Chang Y.J."/>
            <person name="Pukall R."/>
            <person name="Saunders E."/>
            <person name="Lapidus A."/>
            <person name="Copeland A."/>
            <person name="Nolan M."/>
            <person name="Glavina Del Rio T."/>
            <person name="Lucas S."/>
            <person name="Chen F."/>
            <person name="Tice H."/>
            <person name="Cheng J.F."/>
            <person name="Han C."/>
            <person name="Detter J.C."/>
            <person name="Bruce D."/>
            <person name="Goodwin L."/>
            <person name="Pitluck S."/>
            <person name="Mikhailova N."/>
            <person name="Liolios K."/>
            <person name="Pati A."/>
            <person name="Ivanova N."/>
            <person name="Mavromatis K."/>
            <person name="Chen A."/>
            <person name="Palaniappan K."/>
            <person name="Land M."/>
            <person name="Hauser L."/>
            <person name="Jeffries C.D."/>
            <person name="Brettin T."/>
            <person name="Rohde M."/>
            <person name="Goker M."/>
            <person name="Bristow J."/>
            <person name="Eisen J.A."/>
            <person name="Markowitz V."/>
            <person name="Hugenholtz P."/>
            <person name="Kyrpides N.C."/>
            <person name="Klenk H.P."/>
        </authorList>
    </citation>
    <scope>NUCLEOTIDE SEQUENCE [LARGE SCALE GENOMIC DNA]</scope>
    <source>
        <strain>ATCC 25085 / DSM 20731 / CCUG 9996 / CIP 106432 / VR4</strain>
    </source>
</reference>
<feature type="chain" id="PRO_0000218561" description="Glutaconyl-CoA decarboxylase subunit beta">
    <location>
        <begin position="1"/>
        <end position="375"/>
    </location>
</feature>
<feature type="transmembrane region" description="Helical" evidence="1">
    <location>
        <begin position="16"/>
        <end position="39"/>
    </location>
</feature>
<feature type="transmembrane region" description="Helical" evidence="1">
    <location>
        <begin position="46"/>
        <end position="65"/>
    </location>
</feature>
<feature type="transmembrane region" description="Helical" evidence="1">
    <location>
        <begin position="74"/>
        <end position="96"/>
    </location>
</feature>
<feature type="transmembrane region" description="Helical" evidence="1">
    <location>
        <begin position="107"/>
        <end position="130"/>
    </location>
</feature>
<feature type="transmembrane region" description="Helical" evidence="1">
    <location>
        <begin position="137"/>
        <end position="153"/>
    </location>
</feature>
<feature type="transmembrane region" description="Helical" evidence="1">
    <location>
        <begin position="160"/>
        <end position="178"/>
    </location>
</feature>
<feature type="transmembrane region" description="Helical" evidence="1">
    <location>
        <begin position="208"/>
        <end position="232"/>
    </location>
</feature>
<feature type="transmembrane region" description="Helical" evidence="1">
    <location>
        <begin position="254"/>
        <end position="271"/>
    </location>
</feature>
<feature type="transmembrane region" description="Helical" evidence="1">
    <location>
        <begin position="284"/>
        <end position="302"/>
    </location>
</feature>
<feature type="transmembrane region" description="Helical" evidence="1">
    <location>
        <begin position="316"/>
        <end position="332"/>
    </location>
</feature>
<feature type="transmembrane region" description="Helical" evidence="1">
    <location>
        <begin position="345"/>
        <end position="369"/>
    </location>
</feature>